<feature type="chain" id="PRO_0000103794" description="Uncharacterized protein Mb1335">
    <location>
        <begin position="1"/>
        <end position="161"/>
    </location>
</feature>
<feature type="transmembrane region" description="Helical" evidence="1">
    <location>
        <begin position="22"/>
        <end position="42"/>
    </location>
</feature>
<feature type="transmembrane region" description="Helical" evidence="1">
    <location>
        <begin position="43"/>
        <end position="63"/>
    </location>
</feature>
<feature type="transmembrane region" description="Helical" evidence="1">
    <location>
        <begin position="89"/>
        <end position="109"/>
    </location>
</feature>
<feature type="transmembrane region" description="Helical" evidence="1">
    <location>
        <begin position="110"/>
        <end position="130"/>
    </location>
</feature>
<feature type="region of interest" description="Disordered" evidence="2">
    <location>
        <begin position="141"/>
        <end position="161"/>
    </location>
</feature>
<reference key="1">
    <citation type="journal article" date="2003" name="Proc. Natl. Acad. Sci. U.S.A.">
        <title>The complete genome sequence of Mycobacterium bovis.</title>
        <authorList>
            <person name="Garnier T."/>
            <person name="Eiglmeier K."/>
            <person name="Camus J.-C."/>
            <person name="Medina N."/>
            <person name="Mansoor H."/>
            <person name="Pryor M."/>
            <person name="Duthoy S."/>
            <person name="Grondin S."/>
            <person name="Lacroix C."/>
            <person name="Monsempe C."/>
            <person name="Simon S."/>
            <person name="Harris B."/>
            <person name="Atkin R."/>
            <person name="Doggett J."/>
            <person name="Mayes R."/>
            <person name="Keating L."/>
            <person name="Wheeler P.R."/>
            <person name="Parkhill J."/>
            <person name="Barrell B.G."/>
            <person name="Cole S.T."/>
            <person name="Gordon S.V."/>
            <person name="Hewinson R.G."/>
        </authorList>
    </citation>
    <scope>NUCLEOTIDE SEQUENCE [LARGE SCALE GENOMIC DNA]</scope>
    <source>
        <strain>ATCC BAA-935 / AF2122/97</strain>
    </source>
</reference>
<reference key="2">
    <citation type="journal article" date="2017" name="Genome Announc.">
        <title>Updated reference genome sequence and annotation of Mycobacterium bovis AF2122/97.</title>
        <authorList>
            <person name="Malone K.M."/>
            <person name="Farrell D."/>
            <person name="Stuber T.P."/>
            <person name="Schubert O.T."/>
            <person name="Aebersold R."/>
            <person name="Robbe-Austerman S."/>
            <person name="Gordon S.V."/>
        </authorList>
    </citation>
    <scope>NUCLEOTIDE SEQUENCE [LARGE SCALE GENOMIC DNA]</scope>
    <scope>GENOME REANNOTATION</scope>
    <source>
        <strain>ATCC BAA-935 / AF2122/97</strain>
    </source>
</reference>
<evidence type="ECO:0000255" key="1"/>
<evidence type="ECO:0000256" key="2">
    <source>
        <dbReference type="SAM" id="MobiDB-lite"/>
    </source>
</evidence>
<evidence type="ECO:0000305" key="3"/>
<comment type="subcellular location">
    <subcellularLocation>
        <location evidence="3">Cell membrane</location>
        <topology evidence="3">Multi-pass membrane protein</topology>
    </subcellularLocation>
</comment>
<comment type="similarity">
    <text evidence="3">To M.leprae ML1138.</text>
</comment>
<accession>P64802</accession>
<accession>A0A1R3XXY5</accession>
<accession>Q10619</accession>
<accession>X2BHB8</accession>
<gene>
    <name type="ordered locus">BQ2027_MB1335</name>
</gene>
<name>Y1335_MYCBO</name>
<proteinExistence type="predicted"/>
<sequence>MTTPAQDAPLVFPSVAFRPVRLFFINVGLAAVAMLVAGVFGHLTVGMFLGLGLLLGLLNALLVRRSAESITAKEHPLKRSMALNSASRLAIITILGLIIAYIFRPAGLGVVFGLAFFQVLLVATTALPVLKKLRTATEEPVATYSSNGQTGGSEGRSASDD</sequence>
<organism>
    <name type="scientific">Mycobacterium bovis (strain ATCC BAA-935 / AF2122/97)</name>
    <dbReference type="NCBI Taxonomy" id="233413"/>
    <lineage>
        <taxon>Bacteria</taxon>
        <taxon>Bacillati</taxon>
        <taxon>Actinomycetota</taxon>
        <taxon>Actinomycetes</taxon>
        <taxon>Mycobacteriales</taxon>
        <taxon>Mycobacteriaceae</taxon>
        <taxon>Mycobacterium</taxon>
        <taxon>Mycobacterium tuberculosis complex</taxon>
    </lineage>
</organism>
<keyword id="KW-1003">Cell membrane</keyword>
<keyword id="KW-0472">Membrane</keyword>
<keyword id="KW-1185">Reference proteome</keyword>
<keyword id="KW-0812">Transmembrane</keyword>
<keyword id="KW-1133">Transmembrane helix</keyword>
<dbReference type="EMBL" id="LT708304">
    <property type="protein sequence ID" value="SIT99938.1"/>
    <property type="molecule type" value="Genomic_DNA"/>
</dbReference>
<dbReference type="RefSeq" id="NP_854989.1">
    <property type="nucleotide sequence ID" value="NC_002945.3"/>
</dbReference>
<dbReference type="RefSeq" id="WP_003406680.1">
    <property type="nucleotide sequence ID" value="NC_002945.4"/>
</dbReference>
<dbReference type="KEGG" id="mbo:BQ2027_MB1335"/>
<dbReference type="PATRIC" id="fig|233413.5.peg.1464"/>
<dbReference type="Proteomes" id="UP000001419">
    <property type="component" value="Chromosome"/>
</dbReference>
<dbReference type="GO" id="GO:0005886">
    <property type="term" value="C:plasma membrane"/>
    <property type="evidence" value="ECO:0007669"/>
    <property type="project" value="UniProtKB-SubCell"/>
</dbReference>
<dbReference type="InterPro" id="IPR005598">
    <property type="entry name" value="ATP_synth_I"/>
</dbReference>
<dbReference type="Pfam" id="PF03899">
    <property type="entry name" value="ATP-synt_I"/>
    <property type="match status" value="1"/>
</dbReference>
<protein>
    <recommendedName>
        <fullName>Uncharacterized protein Mb1335</fullName>
    </recommendedName>
</protein>